<accession>A8GSZ9</accession>
<comment type="similarity">
    <text evidence="1">Belongs to the bacterial ribosomal protein bL34 family.</text>
</comment>
<organism>
    <name type="scientific">Rickettsia rickettsii (strain Sheila Smith)</name>
    <dbReference type="NCBI Taxonomy" id="392021"/>
    <lineage>
        <taxon>Bacteria</taxon>
        <taxon>Pseudomonadati</taxon>
        <taxon>Pseudomonadota</taxon>
        <taxon>Alphaproteobacteria</taxon>
        <taxon>Rickettsiales</taxon>
        <taxon>Rickettsiaceae</taxon>
        <taxon>Rickettsieae</taxon>
        <taxon>Rickettsia</taxon>
        <taxon>spotted fever group</taxon>
    </lineage>
</organism>
<reference key="1">
    <citation type="submission" date="2007-09" db="EMBL/GenBank/DDBJ databases">
        <title>Complete genome sequence of Rickettsia rickettsii.</title>
        <authorList>
            <person name="Madan A."/>
            <person name="Fahey J."/>
            <person name="Helton E."/>
            <person name="Ketteman M."/>
            <person name="Madan A."/>
            <person name="Rodrigues S."/>
            <person name="Sanchez A."/>
            <person name="Dasch G."/>
            <person name="Eremeeva M."/>
        </authorList>
    </citation>
    <scope>NUCLEOTIDE SEQUENCE [LARGE SCALE GENOMIC DNA]</scope>
    <source>
        <strain>Sheila Smith</strain>
    </source>
</reference>
<proteinExistence type="inferred from homology"/>
<evidence type="ECO:0000255" key="1">
    <source>
        <dbReference type="HAMAP-Rule" id="MF_00391"/>
    </source>
</evidence>
<evidence type="ECO:0000256" key="2">
    <source>
        <dbReference type="SAM" id="MobiDB-lite"/>
    </source>
</evidence>
<evidence type="ECO:0000305" key="3"/>
<sequence length="44" mass="5193">MKRTFQPSNLVRKRRHGFRSRMATPTGRAILRKRRAKGRNKLSA</sequence>
<keyword id="KW-0687">Ribonucleoprotein</keyword>
<keyword id="KW-0689">Ribosomal protein</keyword>
<gene>
    <name evidence="1" type="primary">rpmH</name>
    <name type="ordered locus">A1G_05155</name>
</gene>
<dbReference type="EMBL" id="CP000848">
    <property type="protein sequence ID" value="ABV76524.1"/>
    <property type="molecule type" value="Genomic_DNA"/>
</dbReference>
<dbReference type="RefSeq" id="WP_004997918.1">
    <property type="nucleotide sequence ID" value="NZ_CP121767.1"/>
</dbReference>
<dbReference type="SMR" id="A8GSZ9"/>
<dbReference type="GeneID" id="95361429"/>
<dbReference type="KEGG" id="rri:A1G_05155"/>
<dbReference type="HOGENOM" id="CLU_129938_2_0_5"/>
<dbReference type="Proteomes" id="UP000006832">
    <property type="component" value="Chromosome"/>
</dbReference>
<dbReference type="GO" id="GO:1990904">
    <property type="term" value="C:ribonucleoprotein complex"/>
    <property type="evidence" value="ECO:0007669"/>
    <property type="project" value="UniProtKB-KW"/>
</dbReference>
<dbReference type="GO" id="GO:0005840">
    <property type="term" value="C:ribosome"/>
    <property type="evidence" value="ECO:0007669"/>
    <property type="project" value="UniProtKB-KW"/>
</dbReference>
<dbReference type="GO" id="GO:0003735">
    <property type="term" value="F:structural constituent of ribosome"/>
    <property type="evidence" value="ECO:0007669"/>
    <property type="project" value="InterPro"/>
</dbReference>
<dbReference type="GO" id="GO:0006412">
    <property type="term" value="P:translation"/>
    <property type="evidence" value="ECO:0007669"/>
    <property type="project" value="UniProtKB-UniRule"/>
</dbReference>
<dbReference type="FunFam" id="1.10.287.3980:FF:000001">
    <property type="entry name" value="Mitochondrial ribosomal protein L34"/>
    <property type="match status" value="1"/>
</dbReference>
<dbReference type="Gene3D" id="1.10.287.3980">
    <property type="match status" value="1"/>
</dbReference>
<dbReference type="HAMAP" id="MF_00391">
    <property type="entry name" value="Ribosomal_bL34"/>
    <property type="match status" value="1"/>
</dbReference>
<dbReference type="InterPro" id="IPR000271">
    <property type="entry name" value="Ribosomal_bL34"/>
</dbReference>
<dbReference type="InterPro" id="IPR020939">
    <property type="entry name" value="Ribosomal_bL34_CS"/>
</dbReference>
<dbReference type="NCBIfam" id="TIGR01030">
    <property type="entry name" value="rpmH_bact"/>
    <property type="match status" value="1"/>
</dbReference>
<dbReference type="PANTHER" id="PTHR14503:SF4">
    <property type="entry name" value="LARGE RIBOSOMAL SUBUNIT PROTEIN BL34M"/>
    <property type="match status" value="1"/>
</dbReference>
<dbReference type="PANTHER" id="PTHR14503">
    <property type="entry name" value="MITOCHONDRIAL RIBOSOMAL PROTEIN 34 FAMILY MEMBER"/>
    <property type="match status" value="1"/>
</dbReference>
<dbReference type="Pfam" id="PF00468">
    <property type="entry name" value="Ribosomal_L34"/>
    <property type="match status" value="1"/>
</dbReference>
<dbReference type="PROSITE" id="PS00784">
    <property type="entry name" value="RIBOSOMAL_L34"/>
    <property type="match status" value="1"/>
</dbReference>
<protein>
    <recommendedName>
        <fullName evidence="1">Large ribosomal subunit protein bL34</fullName>
    </recommendedName>
    <alternativeName>
        <fullName evidence="3">50S ribosomal protein L34</fullName>
    </alternativeName>
</protein>
<name>RL34_RICRS</name>
<feature type="chain" id="PRO_1000013432" description="Large ribosomal subunit protein bL34">
    <location>
        <begin position="1"/>
        <end position="44"/>
    </location>
</feature>
<feature type="region of interest" description="Disordered" evidence="2">
    <location>
        <begin position="15"/>
        <end position="44"/>
    </location>
</feature>
<feature type="compositionally biased region" description="Basic residues" evidence="2">
    <location>
        <begin position="30"/>
        <end position="44"/>
    </location>
</feature>